<organism>
    <name type="scientific">Coccidioides immitis (strain RS)</name>
    <name type="common">Valley fever fungus</name>
    <dbReference type="NCBI Taxonomy" id="246410"/>
    <lineage>
        <taxon>Eukaryota</taxon>
        <taxon>Fungi</taxon>
        <taxon>Dikarya</taxon>
        <taxon>Ascomycota</taxon>
        <taxon>Pezizomycotina</taxon>
        <taxon>Eurotiomycetes</taxon>
        <taxon>Eurotiomycetidae</taxon>
        <taxon>Onygenales</taxon>
        <taxon>Onygenaceae</taxon>
        <taxon>Coccidioides</taxon>
    </lineage>
</organism>
<sequence>MAFNFNWSPLMADAGFYTRAQDLLTTALNKSPKPPIIVDDIVVTELNLGSIPPELEILEIGDLAEDRFRGIFKMSYSGDAFLTLKTRVQANPLNTYLITRPAYASPKPLAAASGLTIPLQITLSNFRLSGFVILVFSKQKGITVVFRNDPLESLKVSSTFDSIPSVRDYLQREIEGQLRILFMDELPAIIHRLSLRLWVPEYRGLDAEARESPAASASGPGEDPLLSPPKDPVDASGNLLSSADIASLSLDSGVEMHSLFSQKNLLRLAALTNSQRTLSLFTPSIREVVFRAWTGCADQGEGAASGVVSPGSPVLSRTHSHISSPLSSLQDASSVLSLQNRSTTPGSSFSGYGLSLGAGRHSKTRPTRKRKKRVVDLRKHNKPADAESVSADSTFTESTTPPTVFSSSVIQEEANDDPVTPPMSPETTMRIPNRQHRFSTSEDKGKLRASVAQQLTYTQPSHSTLHAQRANHCPMIPLSADGAKTSSQQQPISHGSYLAPREKSHEASSAYESNANRSITDAVPNSSILEQAWMMKMANEIARRIQEGKFAANNNYPGAWEQARARTPPPAYGQ</sequence>
<comment type="function">
    <text evidence="1">Component of the ERMES/MDM complex, which serves as a molecular tether to connect the endoplasmic reticulum (ER) and mitochondria. Components of this complex are involved in the control of mitochondrial shape and protein biogenesis, and function in nonvesicular lipid trafficking between the ER and mitochondria. MDM34 is required for the interaction of the ER-resident membrane protein MMM1 and the outer mitochondrial membrane-resident beta-barrel protein MDM10.</text>
</comment>
<comment type="subunit">
    <text evidence="1">Component of the ER-mitochondria encounter structure (ERMES) or MDM complex, composed of MMM1, MDM10, MDM12 and MDM34.</text>
</comment>
<comment type="subcellular location">
    <subcellularLocation>
        <location evidence="1">Mitochondrion outer membrane</location>
        <topology evidence="1">Multi-pass membrane protein</topology>
    </subcellularLocation>
    <text evidence="1">The ERMES/MDM complex localizes to a few discrete foci (around 10 per single cell), that represent mitochondria-endoplasmic reticulum junctions. These foci are often found next to mtDNA nucleoids.</text>
</comment>
<comment type="domain">
    <text evidence="1">Lacks alpha-helical transmembrane segments, suggesting that it resides in the membrane via beta-sheet conformations similar to those predicted for other outer membrane proteins and porin.</text>
</comment>
<comment type="domain">
    <text evidence="1">The SMP-LTD domain is a barrel-like domain that can bind various types of glycerophospholipids in its interior and mediate their transfer between two adjacent bilayers.</text>
</comment>
<comment type="similarity">
    <text evidence="1">Belongs to the MDM34 family.</text>
</comment>
<feature type="chain" id="PRO_0000384338" description="Mitochondrial distribution and morphology protein 34">
    <location>
        <begin position="1"/>
        <end position="574"/>
    </location>
</feature>
<feature type="domain" description="SMP-LTD" evidence="1">
    <location>
        <begin position="1"/>
        <end position="195"/>
    </location>
</feature>
<feature type="region of interest" description="Disordered" evidence="2">
    <location>
        <begin position="210"/>
        <end position="233"/>
    </location>
</feature>
<feature type="region of interest" description="Disordered" evidence="2">
    <location>
        <begin position="301"/>
        <end position="403"/>
    </location>
</feature>
<feature type="region of interest" description="Disordered" evidence="2">
    <location>
        <begin position="479"/>
        <end position="515"/>
    </location>
</feature>
<feature type="compositionally biased region" description="Low complexity" evidence="2">
    <location>
        <begin position="212"/>
        <end position="224"/>
    </location>
</feature>
<feature type="compositionally biased region" description="Low complexity" evidence="2">
    <location>
        <begin position="302"/>
        <end position="314"/>
    </location>
</feature>
<feature type="compositionally biased region" description="Low complexity" evidence="2">
    <location>
        <begin position="323"/>
        <end position="334"/>
    </location>
</feature>
<feature type="compositionally biased region" description="Polar residues" evidence="2">
    <location>
        <begin position="335"/>
        <end position="345"/>
    </location>
</feature>
<feature type="compositionally biased region" description="Low complexity" evidence="2">
    <location>
        <begin position="346"/>
        <end position="359"/>
    </location>
</feature>
<feature type="compositionally biased region" description="Basic residues" evidence="2">
    <location>
        <begin position="360"/>
        <end position="373"/>
    </location>
</feature>
<feature type="compositionally biased region" description="Basic and acidic residues" evidence="2">
    <location>
        <begin position="374"/>
        <end position="385"/>
    </location>
</feature>
<feature type="compositionally biased region" description="Low complexity" evidence="2">
    <location>
        <begin position="393"/>
        <end position="403"/>
    </location>
</feature>
<feature type="compositionally biased region" description="Polar residues" evidence="2">
    <location>
        <begin position="484"/>
        <end position="493"/>
    </location>
</feature>
<evidence type="ECO:0000255" key="1">
    <source>
        <dbReference type="HAMAP-Rule" id="MF_03105"/>
    </source>
</evidence>
<evidence type="ECO:0000256" key="2">
    <source>
        <dbReference type="SAM" id="MobiDB-lite"/>
    </source>
</evidence>
<name>MDM34_COCIM</name>
<dbReference type="EMBL" id="GG704911">
    <property type="protein sequence ID" value="EAS37076.3"/>
    <property type="molecule type" value="Genomic_DNA"/>
</dbReference>
<dbReference type="RefSeq" id="XP_001248659.1">
    <property type="nucleotide sequence ID" value="XM_001248658.2"/>
</dbReference>
<dbReference type="SMR" id="Q1E4T3"/>
<dbReference type="FunCoup" id="Q1E4T3">
    <property type="interactions" value="50"/>
</dbReference>
<dbReference type="STRING" id="246410.Q1E4T3"/>
<dbReference type="GeneID" id="4566099"/>
<dbReference type="KEGG" id="cim:CIMG_02430"/>
<dbReference type="VEuPathDB" id="FungiDB:CIMG_02430"/>
<dbReference type="InParanoid" id="Q1E4T3"/>
<dbReference type="OMA" id="VFRAWSG"/>
<dbReference type="OrthoDB" id="17927at2759"/>
<dbReference type="Proteomes" id="UP000001261">
    <property type="component" value="Unassembled WGS sequence"/>
</dbReference>
<dbReference type="GO" id="GO:0032865">
    <property type="term" value="C:ERMES complex"/>
    <property type="evidence" value="ECO:0007669"/>
    <property type="project" value="UniProtKB-UniRule"/>
</dbReference>
<dbReference type="GO" id="GO:0008289">
    <property type="term" value="F:lipid binding"/>
    <property type="evidence" value="ECO:0007669"/>
    <property type="project" value="UniProtKB-KW"/>
</dbReference>
<dbReference type="GO" id="GO:0000002">
    <property type="term" value="P:mitochondrial genome maintenance"/>
    <property type="evidence" value="ECO:0007669"/>
    <property type="project" value="UniProtKB-UniRule"/>
</dbReference>
<dbReference type="GO" id="GO:1990456">
    <property type="term" value="P:mitochondrion-endoplasmic reticulum membrane tethering"/>
    <property type="evidence" value="ECO:0007669"/>
    <property type="project" value="TreeGrafter"/>
</dbReference>
<dbReference type="GO" id="GO:0015914">
    <property type="term" value="P:phospholipid transport"/>
    <property type="evidence" value="ECO:0007669"/>
    <property type="project" value="TreeGrafter"/>
</dbReference>
<dbReference type="CDD" id="cd21673">
    <property type="entry name" value="SMP_Mdm34"/>
    <property type="match status" value="1"/>
</dbReference>
<dbReference type="HAMAP" id="MF_03105">
    <property type="entry name" value="Mdm34"/>
    <property type="match status" value="1"/>
</dbReference>
<dbReference type="InterPro" id="IPR027536">
    <property type="entry name" value="Mdm34"/>
</dbReference>
<dbReference type="InterPro" id="IPR031468">
    <property type="entry name" value="SMP_LBD"/>
</dbReference>
<dbReference type="PANTHER" id="PTHR28185">
    <property type="entry name" value="MITOCHONDRIAL DISTRIBUTION AND MORPHOLOGY PROTEIN 34"/>
    <property type="match status" value="1"/>
</dbReference>
<dbReference type="PANTHER" id="PTHR28185:SF1">
    <property type="entry name" value="MITOCHONDRIAL DISTRIBUTION AND MORPHOLOGY PROTEIN 34"/>
    <property type="match status" value="1"/>
</dbReference>
<dbReference type="PROSITE" id="PS51847">
    <property type="entry name" value="SMP"/>
    <property type="match status" value="1"/>
</dbReference>
<protein>
    <recommendedName>
        <fullName evidence="1">Mitochondrial distribution and morphology protein 34</fullName>
    </recommendedName>
</protein>
<accession>Q1E4T3</accession>
<accession>J3KLQ9</accession>
<keyword id="KW-0445">Lipid transport</keyword>
<keyword id="KW-0446">Lipid-binding</keyword>
<keyword id="KW-0472">Membrane</keyword>
<keyword id="KW-0496">Mitochondrion</keyword>
<keyword id="KW-1000">Mitochondrion outer membrane</keyword>
<keyword id="KW-1185">Reference proteome</keyword>
<keyword id="KW-0812">Transmembrane</keyword>
<keyword id="KW-1134">Transmembrane beta strand</keyword>
<keyword id="KW-0813">Transport</keyword>
<reference key="1">
    <citation type="journal article" date="2009" name="Genome Res.">
        <title>Comparative genomic analyses of the human fungal pathogens Coccidioides and their relatives.</title>
        <authorList>
            <person name="Sharpton T.J."/>
            <person name="Stajich J.E."/>
            <person name="Rounsley S.D."/>
            <person name="Gardner M.J."/>
            <person name="Wortman J.R."/>
            <person name="Jordar V.S."/>
            <person name="Maiti R."/>
            <person name="Kodira C.D."/>
            <person name="Neafsey D.E."/>
            <person name="Zeng Q."/>
            <person name="Hung C.-Y."/>
            <person name="McMahan C."/>
            <person name="Muszewska A."/>
            <person name="Grynberg M."/>
            <person name="Mandel M.A."/>
            <person name="Kellner E.M."/>
            <person name="Barker B.M."/>
            <person name="Galgiani J.N."/>
            <person name="Orbach M.J."/>
            <person name="Kirkland T.N."/>
            <person name="Cole G.T."/>
            <person name="Henn M.R."/>
            <person name="Birren B.W."/>
            <person name="Taylor J.W."/>
        </authorList>
    </citation>
    <scope>NUCLEOTIDE SEQUENCE [LARGE SCALE GENOMIC DNA]</scope>
    <source>
        <strain>RS</strain>
    </source>
</reference>
<reference key="2">
    <citation type="journal article" date="2010" name="Genome Res.">
        <title>Population genomic sequencing of Coccidioides fungi reveals recent hybridization and transposon control.</title>
        <authorList>
            <person name="Neafsey D.E."/>
            <person name="Barker B.M."/>
            <person name="Sharpton T.J."/>
            <person name="Stajich J.E."/>
            <person name="Park D.J."/>
            <person name="Whiston E."/>
            <person name="Hung C.-Y."/>
            <person name="McMahan C."/>
            <person name="White J."/>
            <person name="Sykes S."/>
            <person name="Heiman D."/>
            <person name="Young S."/>
            <person name="Zeng Q."/>
            <person name="Abouelleil A."/>
            <person name="Aftuck L."/>
            <person name="Bessette D."/>
            <person name="Brown A."/>
            <person name="FitzGerald M."/>
            <person name="Lui A."/>
            <person name="Macdonald J.P."/>
            <person name="Priest M."/>
            <person name="Orbach M.J."/>
            <person name="Galgiani J.N."/>
            <person name="Kirkland T.N."/>
            <person name="Cole G.T."/>
            <person name="Birren B.W."/>
            <person name="Henn M.R."/>
            <person name="Taylor J.W."/>
            <person name="Rounsley S.D."/>
        </authorList>
    </citation>
    <scope>GENOME REANNOTATION</scope>
    <source>
        <strain>RS</strain>
    </source>
</reference>
<gene>
    <name evidence="1" type="primary">MDM34</name>
    <name type="ORF">CIMG_02430</name>
</gene>
<proteinExistence type="inferred from homology"/>